<comment type="catalytic activity">
    <reaction>
        <text>L-seryl-[protein] + ATP = O-phospho-L-seryl-[protein] + ADP + H(+)</text>
        <dbReference type="Rhea" id="RHEA:17989"/>
        <dbReference type="Rhea" id="RHEA-COMP:9863"/>
        <dbReference type="Rhea" id="RHEA-COMP:11604"/>
        <dbReference type="ChEBI" id="CHEBI:15378"/>
        <dbReference type="ChEBI" id="CHEBI:29999"/>
        <dbReference type="ChEBI" id="CHEBI:30616"/>
        <dbReference type="ChEBI" id="CHEBI:83421"/>
        <dbReference type="ChEBI" id="CHEBI:456216"/>
        <dbReference type="EC" id="2.7.11.22"/>
    </reaction>
</comment>
<comment type="catalytic activity">
    <reaction>
        <text>L-threonyl-[protein] + ATP = O-phospho-L-threonyl-[protein] + ADP + H(+)</text>
        <dbReference type="Rhea" id="RHEA:46608"/>
        <dbReference type="Rhea" id="RHEA-COMP:11060"/>
        <dbReference type="Rhea" id="RHEA-COMP:11605"/>
        <dbReference type="ChEBI" id="CHEBI:15378"/>
        <dbReference type="ChEBI" id="CHEBI:30013"/>
        <dbReference type="ChEBI" id="CHEBI:30616"/>
        <dbReference type="ChEBI" id="CHEBI:61977"/>
        <dbReference type="ChEBI" id="CHEBI:456216"/>
        <dbReference type="EC" id="2.7.11.22"/>
    </reaction>
</comment>
<comment type="developmental stage">
    <text evidence="4">Up-regulated in aspidocytes, a resistant cell type induced by a range of toxins including heavy metals and antibiotics.</text>
</comment>
<comment type="similarity">
    <text evidence="5">Belongs to the protein kinase superfamily. CMGC Ser/Thr protein kinase family. CDC2/CDKX subfamily.</text>
</comment>
<proteinExistence type="evidence at transcript level"/>
<evidence type="ECO:0000255" key="1">
    <source>
        <dbReference type="PROSITE-ProRule" id="PRU00159"/>
    </source>
</evidence>
<evidence type="ECO:0000255" key="2">
    <source>
        <dbReference type="PROSITE-ProRule" id="PRU10027"/>
    </source>
</evidence>
<evidence type="ECO:0000256" key="3">
    <source>
        <dbReference type="SAM" id="MobiDB-lite"/>
    </source>
</evidence>
<evidence type="ECO:0000269" key="4">
    <source>
    </source>
</evidence>
<evidence type="ECO:0000305" key="5"/>
<name>Y8487_DICDI</name>
<protein>
    <recommendedName>
        <fullName>Probable cyclin-dependent serine/threonine-protein kinase DDB_G0278487</fullName>
        <ecNumber>2.7.11.22</ecNumber>
    </recommendedName>
</protein>
<accession>Q54Y06</accession>
<dbReference type="EC" id="2.7.11.22"/>
<dbReference type="EMBL" id="AAFI02000023">
    <property type="protein sequence ID" value="EAL68416.1"/>
    <property type="molecule type" value="Genomic_DNA"/>
</dbReference>
<dbReference type="RefSeq" id="XP_642396.1">
    <property type="nucleotide sequence ID" value="XM_637304.1"/>
</dbReference>
<dbReference type="SMR" id="Q54Y06"/>
<dbReference type="FunCoup" id="Q54Y06">
    <property type="interactions" value="2"/>
</dbReference>
<dbReference type="STRING" id="44689.Q54Y06"/>
<dbReference type="PaxDb" id="44689-DDB0229294"/>
<dbReference type="EnsemblProtists" id="EAL68416">
    <property type="protein sequence ID" value="EAL68416"/>
    <property type="gene ID" value="DDB_G0278487"/>
</dbReference>
<dbReference type="GeneID" id="8621601"/>
<dbReference type="KEGG" id="ddi:DDB_G0278487"/>
<dbReference type="dictyBase" id="DDB_G0278487">
    <property type="gene designation" value="clkB"/>
</dbReference>
<dbReference type="VEuPathDB" id="AmoebaDB:DDB_G0278487"/>
<dbReference type="eggNOG" id="KOG0600">
    <property type="taxonomic scope" value="Eukaryota"/>
</dbReference>
<dbReference type="HOGENOM" id="CLU_430502_0_0_1"/>
<dbReference type="InParanoid" id="Q54Y06"/>
<dbReference type="OMA" id="ICKHIIT"/>
<dbReference type="PhylomeDB" id="Q54Y06"/>
<dbReference type="Reactome" id="R-DDI-6796648">
    <property type="pathway name" value="TP53 Regulates Transcription of DNA Repair Genes"/>
</dbReference>
<dbReference type="Reactome" id="R-DDI-6798695">
    <property type="pathway name" value="Neutrophil degranulation"/>
</dbReference>
<dbReference type="PRO" id="PR:Q54Y06"/>
<dbReference type="Proteomes" id="UP000002195">
    <property type="component" value="Chromosome 3"/>
</dbReference>
<dbReference type="GO" id="GO:0008024">
    <property type="term" value="C:cyclin/CDK positive transcription elongation factor complex"/>
    <property type="evidence" value="ECO:0000318"/>
    <property type="project" value="GO_Central"/>
</dbReference>
<dbReference type="GO" id="GO:0005634">
    <property type="term" value="C:nucleus"/>
    <property type="evidence" value="ECO:0000318"/>
    <property type="project" value="GO_Central"/>
</dbReference>
<dbReference type="GO" id="GO:0005524">
    <property type="term" value="F:ATP binding"/>
    <property type="evidence" value="ECO:0000250"/>
    <property type="project" value="dictyBase"/>
</dbReference>
<dbReference type="GO" id="GO:0030332">
    <property type="term" value="F:cyclin binding"/>
    <property type="evidence" value="ECO:0000318"/>
    <property type="project" value="GO_Central"/>
</dbReference>
<dbReference type="GO" id="GO:0004693">
    <property type="term" value="F:cyclin-dependent protein serine/threonine kinase activity"/>
    <property type="evidence" value="ECO:0007669"/>
    <property type="project" value="UniProtKB-EC"/>
</dbReference>
<dbReference type="GO" id="GO:0106310">
    <property type="term" value="F:protein serine kinase activity"/>
    <property type="evidence" value="ECO:0007669"/>
    <property type="project" value="RHEA"/>
</dbReference>
<dbReference type="GO" id="GO:0004674">
    <property type="term" value="F:protein serine/threonine kinase activity"/>
    <property type="evidence" value="ECO:0000250"/>
    <property type="project" value="dictyBase"/>
</dbReference>
<dbReference type="GO" id="GO:0008353">
    <property type="term" value="F:RNA polymerase II CTD heptapeptide repeat kinase activity"/>
    <property type="evidence" value="ECO:0000318"/>
    <property type="project" value="GO_Central"/>
</dbReference>
<dbReference type="GO" id="GO:0032968">
    <property type="term" value="P:positive regulation of transcription elongation by RNA polymerase II"/>
    <property type="evidence" value="ECO:0000318"/>
    <property type="project" value="GO_Central"/>
</dbReference>
<dbReference type="CDD" id="cd07840">
    <property type="entry name" value="STKc_CDK9_like"/>
    <property type="match status" value="1"/>
</dbReference>
<dbReference type="FunFam" id="1.10.510.10:FF:001022">
    <property type="entry name" value="Cyclin-dependent kinase C-1, putative"/>
    <property type="match status" value="1"/>
</dbReference>
<dbReference type="Gene3D" id="3.30.200.20">
    <property type="entry name" value="Phosphorylase Kinase, domain 1"/>
    <property type="match status" value="1"/>
</dbReference>
<dbReference type="Gene3D" id="1.10.510.10">
    <property type="entry name" value="Transferase(Phosphotransferase) domain 1"/>
    <property type="match status" value="1"/>
</dbReference>
<dbReference type="InterPro" id="IPR050108">
    <property type="entry name" value="CDK"/>
</dbReference>
<dbReference type="InterPro" id="IPR011009">
    <property type="entry name" value="Kinase-like_dom_sf"/>
</dbReference>
<dbReference type="InterPro" id="IPR000719">
    <property type="entry name" value="Prot_kinase_dom"/>
</dbReference>
<dbReference type="InterPro" id="IPR017441">
    <property type="entry name" value="Protein_kinase_ATP_BS"/>
</dbReference>
<dbReference type="InterPro" id="IPR008271">
    <property type="entry name" value="Ser/Thr_kinase_AS"/>
</dbReference>
<dbReference type="PANTHER" id="PTHR24056">
    <property type="entry name" value="CELL DIVISION PROTEIN KINASE"/>
    <property type="match status" value="1"/>
</dbReference>
<dbReference type="PANTHER" id="PTHR24056:SF497">
    <property type="entry name" value="CYCLIN-DEPENDENT SERINE_THREONINE-PROTEIN KINASE DDB_G0278487-RELATED"/>
    <property type="match status" value="1"/>
</dbReference>
<dbReference type="Pfam" id="PF00069">
    <property type="entry name" value="Pkinase"/>
    <property type="match status" value="1"/>
</dbReference>
<dbReference type="SMART" id="SM00220">
    <property type="entry name" value="S_TKc"/>
    <property type="match status" value="1"/>
</dbReference>
<dbReference type="SUPFAM" id="SSF56112">
    <property type="entry name" value="Protein kinase-like (PK-like)"/>
    <property type="match status" value="1"/>
</dbReference>
<dbReference type="PROSITE" id="PS00107">
    <property type="entry name" value="PROTEIN_KINASE_ATP"/>
    <property type="match status" value="1"/>
</dbReference>
<dbReference type="PROSITE" id="PS50011">
    <property type="entry name" value="PROTEIN_KINASE_DOM"/>
    <property type="match status" value="1"/>
</dbReference>
<dbReference type="PROSITE" id="PS00108">
    <property type="entry name" value="PROTEIN_KINASE_ST"/>
    <property type="match status" value="1"/>
</dbReference>
<keyword id="KW-0067">ATP-binding</keyword>
<keyword id="KW-0418">Kinase</keyword>
<keyword id="KW-0547">Nucleotide-binding</keyword>
<keyword id="KW-1185">Reference proteome</keyword>
<keyword id="KW-0723">Serine/threonine-protein kinase</keyword>
<keyword id="KW-0808">Transferase</keyword>
<feature type="chain" id="PRO_0000362064" description="Probable cyclin-dependent serine/threonine-protein kinase DDB_G0278487">
    <location>
        <begin position="1"/>
        <end position="636"/>
    </location>
</feature>
<feature type="domain" description="Protein kinase" evidence="1">
    <location>
        <begin position="64"/>
        <end position="343"/>
    </location>
</feature>
<feature type="region of interest" description="Disordered" evidence="3">
    <location>
        <begin position="1"/>
        <end position="41"/>
    </location>
</feature>
<feature type="region of interest" description="Disordered" evidence="3">
    <location>
        <begin position="378"/>
        <end position="408"/>
    </location>
</feature>
<feature type="region of interest" description="Disordered" evidence="3">
    <location>
        <begin position="473"/>
        <end position="506"/>
    </location>
</feature>
<feature type="region of interest" description="Disordered" evidence="3">
    <location>
        <begin position="527"/>
        <end position="555"/>
    </location>
</feature>
<feature type="region of interest" description="Disordered" evidence="3">
    <location>
        <begin position="579"/>
        <end position="636"/>
    </location>
</feature>
<feature type="compositionally biased region" description="Basic and acidic residues" evidence="3">
    <location>
        <begin position="473"/>
        <end position="485"/>
    </location>
</feature>
<feature type="compositionally biased region" description="Low complexity" evidence="3">
    <location>
        <begin position="486"/>
        <end position="499"/>
    </location>
</feature>
<feature type="compositionally biased region" description="Acidic residues" evidence="3">
    <location>
        <begin position="529"/>
        <end position="555"/>
    </location>
</feature>
<feature type="compositionally biased region" description="Low complexity" evidence="3">
    <location>
        <begin position="579"/>
        <end position="594"/>
    </location>
</feature>
<feature type="compositionally biased region" description="Low complexity" evidence="3">
    <location>
        <begin position="617"/>
        <end position="628"/>
    </location>
</feature>
<feature type="active site" description="Proton acceptor" evidence="1 2">
    <location>
        <position position="184"/>
    </location>
</feature>
<feature type="binding site" evidence="1">
    <location>
        <begin position="70"/>
        <end position="78"/>
    </location>
    <ligand>
        <name>ATP</name>
        <dbReference type="ChEBI" id="CHEBI:30616"/>
    </ligand>
</feature>
<feature type="binding site" evidence="1">
    <location>
        <position position="93"/>
    </location>
    <ligand>
        <name>ATP</name>
        <dbReference type="ChEBI" id="CHEBI:30616"/>
    </ligand>
</feature>
<gene>
    <name type="ORF">DDB_G0278487</name>
</gene>
<organism>
    <name type="scientific">Dictyostelium discoideum</name>
    <name type="common">Social amoeba</name>
    <dbReference type="NCBI Taxonomy" id="44689"/>
    <lineage>
        <taxon>Eukaryota</taxon>
        <taxon>Amoebozoa</taxon>
        <taxon>Evosea</taxon>
        <taxon>Eumycetozoa</taxon>
        <taxon>Dictyostelia</taxon>
        <taxon>Dictyosteliales</taxon>
        <taxon>Dictyosteliaceae</taxon>
        <taxon>Dictyostelium</taxon>
    </lineage>
</organism>
<sequence>MPSQSNNVITSSTASSSMSSSSNSSDASSTSSSNTNNAHSSNNQFVSGQLNLVGNTHTKINDNYEIISKIGEGISGSVFKAIKKGTEEMVALKNFKGWTEGDRASKEECSLLQQLRHIPYITPVIDIYTNFETSEYIIVFPYFEHDLSGLLSEHRLSIPQVKCYFKQLLEGINEIHNAGVMHRDIKAANLLVNNKGSLFIGDLGTATSYTKRSVFSSKVVTLWYRAPELLLGSTQYGPEIDMWSIGCVLIELVTSRNFLPGSSEQQQLEAICKLCGTPTDEIWPNVSQLQNFNQISHLPVYPSRLRTVFKNFSNDFIELLEGLLTLNPKKRLTAEQALQSPFFTNHPLPFKPENMPGYQPIHVLEAVQKRVQQQQELEQQKKQEEQKKQQEEQKKLEDQKKQEEQKKQEDLLKRQRLLKRQQELKKQQDEQRQQELIKKQQEQEQLRLKVEHEKQRQEQERLRLIQQEQERLKRQQQEHEQRLQREQQQQLNQLQQQKESPLNNSYGKINLKRSLDLVNDIRNYCTSETESEYESDEEDFYTEEEVEDYSSDEEDDYYNAQSNKSLYTPIKAMIQQHNNNQQHQQQYPYSQQQQEPISSNPFLQPPKKQRTASTGFNNNNGNNNNNNNLSTPLTIH</sequence>
<reference key="1">
    <citation type="journal article" date="2005" name="Nature">
        <title>The genome of the social amoeba Dictyostelium discoideum.</title>
        <authorList>
            <person name="Eichinger L."/>
            <person name="Pachebat J.A."/>
            <person name="Gloeckner G."/>
            <person name="Rajandream M.A."/>
            <person name="Sucgang R."/>
            <person name="Berriman M."/>
            <person name="Song J."/>
            <person name="Olsen R."/>
            <person name="Szafranski K."/>
            <person name="Xu Q."/>
            <person name="Tunggal B."/>
            <person name="Kummerfeld S."/>
            <person name="Madera M."/>
            <person name="Konfortov B.A."/>
            <person name="Rivero F."/>
            <person name="Bankier A.T."/>
            <person name="Lehmann R."/>
            <person name="Hamlin N."/>
            <person name="Davies R."/>
            <person name="Gaudet P."/>
            <person name="Fey P."/>
            <person name="Pilcher K."/>
            <person name="Chen G."/>
            <person name="Saunders D."/>
            <person name="Sodergren E.J."/>
            <person name="Davis P."/>
            <person name="Kerhornou A."/>
            <person name="Nie X."/>
            <person name="Hall N."/>
            <person name="Anjard C."/>
            <person name="Hemphill L."/>
            <person name="Bason N."/>
            <person name="Farbrother P."/>
            <person name="Desany B."/>
            <person name="Just E."/>
            <person name="Morio T."/>
            <person name="Rost R."/>
            <person name="Churcher C.M."/>
            <person name="Cooper J."/>
            <person name="Haydock S."/>
            <person name="van Driessche N."/>
            <person name="Cronin A."/>
            <person name="Goodhead I."/>
            <person name="Muzny D.M."/>
            <person name="Mourier T."/>
            <person name="Pain A."/>
            <person name="Lu M."/>
            <person name="Harper D."/>
            <person name="Lindsay R."/>
            <person name="Hauser H."/>
            <person name="James K.D."/>
            <person name="Quiles M."/>
            <person name="Madan Babu M."/>
            <person name="Saito T."/>
            <person name="Buchrieser C."/>
            <person name="Wardroper A."/>
            <person name="Felder M."/>
            <person name="Thangavelu M."/>
            <person name="Johnson D."/>
            <person name="Knights A."/>
            <person name="Loulseged H."/>
            <person name="Mungall K.L."/>
            <person name="Oliver K."/>
            <person name="Price C."/>
            <person name="Quail M.A."/>
            <person name="Urushihara H."/>
            <person name="Hernandez J."/>
            <person name="Rabbinowitsch E."/>
            <person name="Steffen D."/>
            <person name="Sanders M."/>
            <person name="Ma J."/>
            <person name="Kohara Y."/>
            <person name="Sharp S."/>
            <person name="Simmonds M.N."/>
            <person name="Spiegler S."/>
            <person name="Tivey A."/>
            <person name="Sugano S."/>
            <person name="White B."/>
            <person name="Walker D."/>
            <person name="Woodward J.R."/>
            <person name="Winckler T."/>
            <person name="Tanaka Y."/>
            <person name="Shaulsky G."/>
            <person name="Schleicher M."/>
            <person name="Weinstock G.M."/>
            <person name="Rosenthal A."/>
            <person name="Cox E.C."/>
            <person name="Chisholm R.L."/>
            <person name="Gibbs R.A."/>
            <person name="Loomis W.F."/>
            <person name="Platzer M."/>
            <person name="Kay R.R."/>
            <person name="Williams J.G."/>
            <person name="Dear P.H."/>
            <person name="Noegel A.A."/>
            <person name="Barrell B.G."/>
            <person name="Kuspa A."/>
        </authorList>
    </citation>
    <scope>NUCLEOTIDE SEQUENCE [LARGE SCALE GENOMIC DNA]</scope>
    <source>
        <strain>AX4</strain>
    </source>
</reference>
<reference key="2">
    <citation type="journal article" date="2007" name="Microbiology">
        <title>A new environmentally resistant cell type from Dictyostelium.</title>
        <authorList>
            <person name="Serafimidis I."/>
            <person name="Bloomfield G."/>
            <person name="Skelton J."/>
            <person name="Ivens A."/>
            <person name="Kay R.R."/>
        </authorList>
    </citation>
    <scope>DEVELOPMENTAL STAGE</scope>
</reference>